<organism>
    <name type="scientific">Escherichia coli (strain K12 / MC4100 / BW2952)</name>
    <dbReference type="NCBI Taxonomy" id="595496"/>
    <lineage>
        <taxon>Bacteria</taxon>
        <taxon>Pseudomonadati</taxon>
        <taxon>Pseudomonadota</taxon>
        <taxon>Gammaproteobacteria</taxon>
        <taxon>Enterobacterales</taxon>
        <taxon>Enterobacteriaceae</taxon>
        <taxon>Escherichia</taxon>
    </lineage>
</organism>
<name>NUDC_ECOBW</name>
<feature type="chain" id="PRO_1000204929" description="NAD-capped RNA hydrolase NudC">
    <location>
        <begin position="1"/>
        <end position="257"/>
    </location>
</feature>
<feature type="domain" description="Nudix hydrolase" evidence="1">
    <location>
        <begin position="125"/>
        <end position="248"/>
    </location>
</feature>
<feature type="short sequence motif" description="Nudix box" evidence="1">
    <location>
        <begin position="159"/>
        <end position="180"/>
    </location>
</feature>
<feature type="binding site" evidence="1">
    <location>
        <position position="25"/>
    </location>
    <ligand>
        <name>substrate</name>
    </ligand>
</feature>
<feature type="binding site" evidence="1">
    <location>
        <position position="69"/>
    </location>
    <ligand>
        <name>substrate</name>
    </ligand>
</feature>
<feature type="binding site" evidence="1">
    <location>
        <position position="98"/>
    </location>
    <ligand>
        <name>Zn(2+)</name>
        <dbReference type="ChEBI" id="CHEBI:29105"/>
    </ligand>
</feature>
<feature type="binding site" evidence="1">
    <location>
        <position position="101"/>
    </location>
    <ligand>
        <name>Zn(2+)</name>
        <dbReference type="ChEBI" id="CHEBI:29105"/>
    </ligand>
</feature>
<feature type="binding site" evidence="1">
    <location>
        <position position="111"/>
    </location>
    <ligand>
        <name>substrate</name>
    </ligand>
</feature>
<feature type="binding site" evidence="1">
    <location>
        <position position="116"/>
    </location>
    <ligand>
        <name>Zn(2+)</name>
        <dbReference type="ChEBI" id="CHEBI:29105"/>
    </ligand>
</feature>
<feature type="binding site" evidence="1">
    <location>
        <position position="119"/>
    </location>
    <ligand>
        <name>Zn(2+)</name>
        <dbReference type="ChEBI" id="CHEBI:29105"/>
    </ligand>
</feature>
<feature type="binding site" evidence="1">
    <location>
        <position position="124"/>
    </location>
    <ligand>
        <name>substrate</name>
    </ligand>
</feature>
<feature type="binding site" evidence="1">
    <location>
        <position position="158"/>
    </location>
    <ligand>
        <name>a divalent metal cation</name>
        <dbReference type="ChEBI" id="CHEBI:60240"/>
        <label>1</label>
    </ligand>
</feature>
<feature type="binding site" evidence="1">
    <location>
        <position position="174"/>
    </location>
    <ligand>
        <name>a divalent metal cation</name>
        <dbReference type="ChEBI" id="CHEBI:60240"/>
        <label>2</label>
    </ligand>
</feature>
<feature type="binding site" evidence="1">
    <location>
        <position position="174"/>
    </location>
    <ligand>
        <name>a divalent metal cation</name>
        <dbReference type="ChEBI" id="CHEBI:60240"/>
        <label>3</label>
    </ligand>
</feature>
<feature type="binding site" evidence="1">
    <location>
        <position position="178"/>
    </location>
    <ligand>
        <name>a divalent metal cation</name>
        <dbReference type="ChEBI" id="CHEBI:60240"/>
        <label>1</label>
    </ligand>
</feature>
<feature type="binding site" evidence="1">
    <location>
        <position position="178"/>
    </location>
    <ligand>
        <name>a divalent metal cation</name>
        <dbReference type="ChEBI" id="CHEBI:60240"/>
        <label>3</label>
    </ligand>
</feature>
<feature type="binding site" evidence="1">
    <location>
        <begin position="192"/>
        <end position="199"/>
    </location>
    <ligand>
        <name>substrate</name>
    </ligand>
</feature>
<feature type="binding site" evidence="1">
    <location>
        <position position="219"/>
    </location>
    <ligand>
        <name>a divalent metal cation</name>
        <dbReference type="ChEBI" id="CHEBI:60240"/>
        <label>1</label>
    </ligand>
</feature>
<feature type="binding site" evidence="1">
    <location>
        <position position="219"/>
    </location>
    <ligand>
        <name>a divalent metal cation</name>
        <dbReference type="ChEBI" id="CHEBI:60240"/>
        <label>3</label>
    </ligand>
</feature>
<feature type="binding site" evidence="1">
    <location>
        <position position="241"/>
    </location>
    <ligand>
        <name>substrate</name>
    </ligand>
</feature>
<gene>
    <name evidence="1" type="primary">nudC</name>
    <name type="ordered locus">BWG_3656</name>
</gene>
<reference key="1">
    <citation type="journal article" date="2009" name="J. Bacteriol.">
        <title>Genomic sequencing reveals regulatory mutations and recombinational events in the widely used MC4100 lineage of Escherichia coli K-12.</title>
        <authorList>
            <person name="Ferenci T."/>
            <person name="Zhou Z."/>
            <person name="Betteridge T."/>
            <person name="Ren Y."/>
            <person name="Liu Y."/>
            <person name="Feng L."/>
            <person name="Reeves P.R."/>
            <person name="Wang L."/>
        </authorList>
    </citation>
    <scope>NUCLEOTIDE SEQUENCE [LARGE SCALE GENOMIC DNA]</scope>
    <source>
        <strain>K12 / MC4100 / BW2952</strain>
    </source>
</reference>
<proteinExistence type="inferred from homology"/>
<protein>
    <recommendedName>
        <fullName evidence="1">NAD-capped RNA hydrolase NudC</fullName>
        <shortName evidence="1">DeNADding enzyme NudC</shortName>
        <ecNumber evidence="1">3.6.1.-</ecNumber>
    </recommendedName>
    <alternativeName>
        <fullName evidence="1">NADH pyrophosphatase</fullName>
        <ecNumber evidence="1">3.6.1.22</ecNumber>
    </alternativeName>
</protein>
<accession>C5A0T7</accession>
<comment type="function">
    <text evidence="1">mRNA decapping enzyme that specifically removes the nicotinamide adenine dinucleotide (NAD) cap from a subset of mRNAs by hydrolyzing the diphosphate linkage to produce nicotinamide mononucleotide (NMN) and 5' monophosphate mRNA. The NAD-cap is present at the 5'-end of some mRNAs and stabilizes RNA against 5'-processing. Has preference for mRNAs with a 5'-end purine. Catalyzes the hydrolysis of a broad range of dinucleotide pyrophosphates.</text>
</comment>
<comment type="catalytic activity">
    <reaction evidence="1">
        <text>a 5'-end NAD(+)-phospho-ribonucleoside in mRNA + H2O = a 5'-end phospho-adenosine-phospho-ribonucleoside in mRNA + beta-nicotinamide D-ribonucleotide + 2 H(+)</text>
        <dbReference type="Rhea" id="RHEA:60876"/>
        <dbReference type="Rhea" id="RHEA-COMP:15698"/>
        <dbReference type="Rhea" id="RHEA-COMP:15719"/>
        <dbReference type="ChEBI" id="CHEBI:14649"/>
        <dbReference type="ChEBI" id="CHEBI:15377"/>
        <dbReference type="ChEBI" id="CHEBI:15378"/>
        <dbReference type="ChEBI" id="CHEBI:144029"/>
        <dbReference type="ChEBI" id="CHEBI:144051"/>
    </reaction>
    <physiologicalReaction direction="left-to-right" evidence="1">
        <dbReference type="Rhea" id="RHEA:60877"/>
    </physiologicalReaction>
</comment>
<comment type="catalytic activity">
    <reaction evidence="1">
        <text>NAD(+) + H2O = beta-nicotinamide D-ribonucleotide + AMP + 2 H(+)</text>
        <dbReference type="Rhea" id="RHEA:11800"/>
        <dbReference type="ChEBI" id="CHEBI:14649"/>
        <dbReference type="ChEBI" id="CHEBI:15377"/>
        <dbReference type="ChEBI" id="CHEBI:15378"/>
        <dbReference type="ChEBI" id="CHEBI:57540"/>
        <dbReference type="ChEBI" id="CHEBI:456215"/>
        <dbReference type="EC" id="3.6.1.22"/>
    </reaction>
</comment>
<comment type="catalytic activity">
    <reaction evidence="1">
        <text>NADH + H2O = reduced beta-nicotinamide D-ribonucleotide + AMP + 2 H(+)</text>
        <dbReference type="Rhea" id="RHEA:48868"/>
        <dbReference type="ChEBI" id="CHEBI:15377"/>
        <dbReference type="ChEBI" id="CHEBI:15378"/>
        <dbReference type="ChEBI" id="CHEBI:57945"/>
        <dbReference type="ChEBI" id="CHEBI:90832"/>
        <dbReference type="ChEBI" id="CHEBI:456215"/>
        <dbReference type="EC" id="3.6.1.22"/>
    </reaction>
</comment>
<comment type="cofactor">
    <cofactor evidence="1">
        <name>Mg(2+)</name>
        <dbReference type="ChEBI" id="CHEBI:18420"/>
    </cofactor>
    <cofactor evidence="1">
        <name>Mn(2+)</name>
        <dbReference type="ChEBI" id="CHEBI:29035"/>
    </cofactor>
    <text evidence="1">Divalent metal cations. Mg(2+) or Mn(2+).</text>
</comment>
<comment type="cofactor">
    <cofactor evidence="1">
        <name>Zn(2+)</name>
        <dbReference type="ChEBI" id="CHEBI:29105"/>
    </cofactor>
    <text evidence="1">Binds 1 zinc ion per subunit.</text>
</comment>
<comment type="subunit">
    <text evidence="1">Homodimer.</text>
</comment>
<comment type="similarity">
    <text evidence="1">Belongs to the Nudix hydrolase family. NudC subfamily.</text>
</comment>
<evidence type="ECO:0000255" key="1">
    <source>
        <dbReference type="HAMAP-Rule" id="MF_00297"/>
    </source>
</evidence>
<dbReference type="EC" id="3.6.1.-" evidence="1"/>
<dbReference type="EC" id="3.6.1.22" evidence="1"/>
<dbReference type="EMBL" id="CP001396">
    <property type="protein sequence ID" value="ACR63863.1"/>
    <property type="molecule type" value="Genomic_DNA"/>
</dbReference>
<dbReference type="RefSeq" id="WP_000373940.1">
    <property type="nucleotide sequence ID" value="NC_012759.1"/>
</dbReference>
<dbReference type="SMR" id="C5A0T7"/>
<dbReference type="GeneID" id="93777898"/>
<dbReference type="KEGG" id="ebw:BWG_3656"/>
<dbReference type="HOGENOM" id="CLU_037162_0_1_6"/>
<dbReference type="GO" id="GO:0005829">
    <property type="term" value="C:cytosol"/>
    <property type="evidence" value="ECO:0007669"/>
    <property type="project" value="TreeGrafter"/>
</dbReference>
<dbReference type="GO" id="GO:0000287">
    <property type="term" value="F:magnesium ion binding"/>
    <property type="evidence" value="ECO:0007669"/>
    <property type="project" value="UniProtKB-UniRule"/>
</dbReference>
<dbReference type="GO" id="GO:0030145">
    <property type="term" value="F:manganese ion binding"/>
    <property type="evidence" value="ECO:0007669"/>
    <property type="project" value="UniProtKB-UniRule"/>
</dbReference>
<dbReference type="GO" id="GO:0000210">
    <property type="term" value="F:NAD+ diphosphatase activity"/>
    <property type="evidence" value="ECO:0007669"/>
    <property type="project" value="UniProtKB-UniRule"/>
</dbReference>
<dbReference type="GO" id="GO:0035529">
    <property type="term" value="F:NADH pyrophosphatase activity"/>
    <property type="evidence" value="ECO:0007669"/>
    <property type="project" value="TreeGrafter"/>
</dbReference>
<dbReference type="GO" id="GO:0110153">
    <property type="term" value="F:RNA NAD-cap (NMN-forming) hydrolase activity"/>
    <property type="evidence" value="ECO:0007669"/>
    <property type="project" value="RHEA"/>
</dbReference>
<dbReference type="GO" id="GO:0008270">
    <property type="term" value="F:zinc ion binding"/>
    <property type="evidence" value="ECO:0007669"/>
    <property type="project" value="UniProtKB-UniRule"/>
</dbReference>
<dbReference type="GO" id="GO:0019677">
    <property type="term" value="P:NAD catabolic process"/>
    <property type="evidence" value="ECO:0007669"/>
    <property type="project" value="TreeGrafter"/>
</dbReference>
<dbReference type="GO" id="GO:0006734">
    <property type="term" value="P:NADH metabolic process"/>
    <property type="evidence" value="ECO:0007669"/>
    <property type="project" value="TreeGrafter"/>
</dbReference>
<dbReference type="GO" id="GO:0006742">
    <property type="term" value="P:NADP catabolic process"/>
    <property type="evidence" value="ECO:0007669"/>
    <property type="project" value="TreeGrafter"/>
</dbReference>
<dbReference type="CDD" id="cd03429">
    <property type="entry name" value="NUDIX_NADH_pyrophosphatase_Nudt13"/>
    <property type="match status" value="1"/>
</dbReference>
<dbReference type="FunFam" id="3.90.79.10:FF:000004">
    <property type="entry name" value="NADH pyrophosphatase"/>
    <property type="match status" value="1"/>
</dbReference>
<dbReference type="FunFam" id="3.90.79.20:FF:000001">
    <property type="entry name" value="NADH pyrophosphatase"/>
    <property type="match status" value="1"/>
</dbReference>
<dbReference type="Gene3D" id="3.90.79.20">
    <property type="match status" value="1"/>
</dbReference>
<dbReference type="Gene3D" id="3.90.79.10">
    <property type="entry name" value="Nucleoside Triphosphate Pyrophosphohydrolase"/>
    <property type="match status" value="1"/>
</dbReference>
<dbReference type="HAMAP" id="MF_00297">
    <property type="entry name" value="Nudix_NudC"/>
    <property type="match status" value="1"/>
</dbReference>
<dbReference type="InterPro" id="IPR050241">
    <property type="entry name" value="NAD-cap_RNA_hydrolase_NudC"/>
</dbReference>
<dbReference type="InterPro" id="IPR049734">
    <property type="entry name" value="NudC-like_C"/>
</dbReference>
<dbReference type="InterPro" id="IPR015797">
    <property type="entry name" value="NUDIX_hydrolase-like_dom_sf"/>
</dbReference>
<dbReference type="InterPro" id="IPR020084">
    <property type="entry name" value="NUDIX_hydrolase_CS"/>
</dbReference>
<dbReference type="InterPro" id="IPR000086">
    <property type="entry name" value="NUDIX_hydrolase_dom"/>
</dbReference>
<dbReference type="InterPro" id="IPR022925">
    <property type="entry name" value="RNA_Hydrolase_NudC"/>
</dbReference>
<dbReference type="InterPro" id="IPR015376">
    <property type="entry name" value="Znr_NADH_PPase"/>
</dbReference>
<dbReference type="NCBIfam" id="NF001299">
    <property type="entry name" value="PRK00241.1"/>
    <property type="match status" value="1"/>
</dbReference>
<dbReference type="PANTHER" id="PTHR42904:SF6">
    <property type="entry name" value="NAD-CAPPED RNA HYDROLASE NUDT12"/>
    <property type="match status" value="1"/>
</dbReference>
<dbReference type="PANTHER" id="PTHR42904">
    <property type="entry name" value="NUDIX HYDROLASE, NUDC SUBFAMILY"/>
    <property type="match status" value="1"/>
</dbReference>
<dbReference type="Pfam" id="PF00293">
    <property type="entry name" value="NUDIX"/>
    <property type="match status" value="1"/>
</dbReference>
<dbReference type="Pfam" id="PF09297">
    <property type="entry name" value="Zn_ribbon_NUD"/>
    <property type="match status" value="1"/>
</dbReference>
<dbReference type="SUPFAM" id="SSF55811">
    <property type="entry name" value="Nudix"/>
    <property type="match status" value="2"/>
</dbReference>
<dbReference type="PROSITE" id="PS51462">
    <property type="entry name" value="NUDIX"/>
    <property type="match status" value="1"/>
</dbReference>
<dbReference type="PROSITE" id="PS00893">
    <property type="entry name" value="NUDIX_BOX"/>
    <property type="match status" value="1"/>
</dbReference>
<sequence>MDRIIEKLDHGWWVVSHEQKLWLPKGELPYGEAANFDLVGQRALQIGEWQGEPVWLVQQQRRHDMGSVRQVIDLDVGLFQLAGRGVQLAEFYRSHKYCGYCGHEMYPSKTEWAMLCSHCRERYYPQIAPCIIVAIRRDDSILLAQHTRHRNGVHTVLAGFVEVGETLEQAVAREVMEESGIKVKNLRYVTSQPWPFPQSLMTAFMAEYDSGDIVIDPKELLEANWYRYDDLPLLPPPGTVARRLIEDTVAMCRAEYE</sequence>
<keyword id="KW-0378">Hydrolase</keyword>
<keyword id="KW-0460">Magnesium</keyword>
<keyword id="KW-0464">Manganese</keyword>
<keyword id="KW-0479">Metal-binding</keyword>
<keyword id="KW-0520">NAD</keyword>
<keyword id="KW-0862">Zinc</keyword>